<organism>
    <name type="scientific">Acetobacter aceti</name>
    <dbReference type="NCBI Taxonomy" id="435"/>
    <lineage>
        <taxon>Bacteria</taxon>
        <taxon>Pseudomonadati</taxon>
        <taxon>Pseudomonadota</taxon>
        <taxon>Alphaproteobacteria</taxon>
        <taxon>Acetobacterales</taxon>
        <taxon>Acetobacteraceae</taxon>
        <taxon>Acetobacter</taxon>
        <taxon>Acetobacter subgen. Acetobacter</taxon>
    </lineage>
</organism>
<keyword id="KW-0808">Transferase</keyword>
<feature type="chain" id="PRO_0000430298" description="Acetyl-CoA:oxalate CoA-transferase">
    <location>
        <begin position="1"/>
        <end position="389"/>
    </location>
</feature>
<feature type="active site" evidence="1">
    <location>
        <position position="237"/>
    </location>
</feature>
<sequence>MTETTPAKPKGPFDGLLVIDLTHVLNGPFGTTILTDLGARTIKIEPPGHGDDTRTYGPYVGDQSLYFSFVNRGKESIVLNLKDEGDRAIFLEMVRKADVLAENFRPGVMDRLGFNYEELAKINPRLIYASSSGFGQTGPLAHYPAYDTIVQAMSGIMMATGFPDGPPTRVGGTSLSDLCGGVFMFCGIASALYARERTGKGAHIDVSMFDGTLAFLQHALMCWSATGKAPARIGNRHPYMAPFDVFQAQDKPFVICCGNDHLFKALCDVIGAPELATDPRFVENHDRMANNDALKAALEKALSKQPAAHWLDVIHKAGVPVGPLLDVAEAANLPQTAARNMLIKSGGVMMPGNPVKISGYDDPHERPGAPKLDEQGAALRKEFAAPEAK</sequence>
<gene>
    <name type="primary">uctC</name>
</gene>
<dbReference type="EC" id="2.8.3.19"/>
<dbReference type="EMBL" id="DQ668372">
    <property type="protein sequence ID" value="ABG35152.1"/>
    <property type="molecule type" value="Genomic_DNA"/>
</dbReference>
<dbReference type="SMR" id="A9X6P9"/>
<dbReference type="KEGG" id="ag:ABG35152"/>
<dbReference type="GO" id="GO:0036412">
    <property type="term" value="F:acetyl-CoA:oxalate CoA-transferase"/>
    <property type="evidence" value="ECO:0007669"/>
    <property type="project" value="RHEA"/>
</dbReference>
<dbReference type="Gene3D" id="3.40.50.10540">
    <property type="entry name" value="Crotonobetainyl-coa:carnitine coa-transferase, domain 1"/>
    <property type="match status" value="1"/>
</dbReference>
<dbReference type="Gene3D" id="3.30.1540.10">
    <property type="entry name" value="formyl-coa transferase, domain 3"/>
    <property type="match status" value="1"/>
</dbReference>
<dbReference type="InterPro" id="IPR050483">
    <property type="entry name" value="CoA-transferase_III_domain"/>
</dbReference>
<dbReference type="InterPro" id="IPR003673">
    <property type="entry name" value="CoA-Trfase_fam_III"/>
</dbReference>
<dbReference type="InterPro" id="IPR044855">
    <property type="entry name" value="CoA-Trfase_III_dom3_sf"/>
</dbReference>
<dbReference type="InterPro" id="IPR023606">
    <property type="entry name" value="CoA-Trfase_III_dom_1_sf"/>
</dbReference>
<dbReference type="NCBIfam" id="NF008511">
    <property type="entry name" value="PRK11430.1"/>
    <property type="match status" value="1"/>
</dbReference>
<dbReference type="PANTHER" id="PTHR48207">
    <property type="entry name" value="SUCCINATE--HYDROXYMETHYLGLUTARATE COA-TRANSFERASE"/>
    <property type="match status" value="1"/>
</dbReference>
<dbReference type="PANTHER" id="PTHR48207:SF3">
    <property type="entry name" value="SUCCINATE--HYDROXYMETHYLGLUTARATE COA-TRANSFERASE"/>
    <property type="match status" value="1"/>
</dbReference>
<dbReference type="Pfam" id="PF02515">
    <property type="entry name" value="CoA_transf_3"/>
    <property type="match status" value="1"/>
</dbReference>
<dbReference type="SUPFAM" id="SSF89796">
    <property type="entry name" value="CoA-transferase family III (CaiB/BaiF)"/>
    <property type="match status" value="1"/>
</dbReference>
<comment type="function">
    <text evidence="2">Involved in the catabolism of oxalate and in the adapatation to low pH. ACOCT serves to prime the oxalate-induced acid tolerance response (ATR) cycle by producing substrate for oxalyl-CoA decarboxylase (OXC) and formyl-coenzyme A transferase (FCOCT). Catalyzes the reversible conversion of acetyl-CoA and oxalate to oxalyl-CoA and acetate. It can also use formyl-CoA and oxalate to produce oxalyl-CoA and formate with significantly reduced specific activity.</text>
</comment>
<comment type="catalytic activity">
    <reaction evidence="2">
        <text>oxalate + acetyl-CoA = oxalyl-CoA + acetate</text>
        <dbReference type="Rhea" id="RHEA:37883"/>
        <dbReference type="ChEBI" id="CHEBI:30089"/>
        <dbReference type="ChEBI" id="CHEBI:30623"/>
        <dbReference type="ChEBI" id="CHEBI:57288"/>
        <dbReference type="ChEBI" id="CHEBI:57388"/>
        <dbReference type="EC" id="2.8.3.19"/>
    </reaction>
</comment>
<comment type="biophysicochemical properties">
    <kinetics>
        <KM evidence="2">1 mM for oxalate (at pH 6.7 and 25 degrees Celsius)</KM>
        <KM evidence="2">81 uM for acetyl-CoA (at pH 6.7 and 25 degrees Celsius)</KM>
        <text>kcat is 1.8 sec(-1) for the CoA-transferase activity with oxalate as substrate (at pH 6.7 and 25 degrees Celsius). kcat is 2 sec(-1) for the CoA-transferase activity with acetyl-CoA as substrate (at pH 6.7 and 25 degrees Celsius).</text>
    </kinetics>
</comment>
<comment type="subunit">
    <text evidence="2">Homodimer.</text>
</comment>
<comment type="mass spectrometry"/>
<comment type="similarity">
    <text evidence="3">Belongs to the CoA-transferase III family.</text>
</comment>
<accession>A9X6P9</accession>
<protein>
    <recommendedName>
        <fullName>Acetyl-CoA:oxalate CoA-transferase</fullName>
        <shortName>ACOCT</shortName>
        <ecNumber>2.8.3.19</ecNumber>
    </recommendedName>
    <alternativeName>
        <fullName>Acetyl-coenzyme A transferase</fullName>
    </alternativeName>
    <alternativeName>
        <fullName>CoA:oxalate CoA-transferase</fullName>
    </alternativeName>
    <alternativeName>
        <fullName>CoAT3</fullName>
    </alternativeName>
</protein>
<evidence type="ECO:0000250" key="1"/>
<evidence type="ECO:0000269" key="2">
    <source>
    </source>
</evidence>
<evidence type="ECO:0000305" key="3"/>
<reference key="1">
    <citation type="journal article" date="2008" name="J. Bacteriol.">
        <title>A specialized citric acid cycle requiring succinyl-coenzyme A (CoA):acetate CoA-transferase (AarC) confers acetic acid resistance on the acidophile Acetobacter aceti.</title>
        <authorList>
            <person name="Mullins E.A."/>
            <person name="Francois J.A."/>
            <person name="Kappock T.J."/>
        </authorList>
    </citation>
    <scope>NUCLEOTIDE SEQUENCE [GENOMIC DNA]</scope>
    <source>
        <strain>1023</strain>
    </source>
</reference>
<reference key="2">
    <citation type="journal article" date="2013" name="PLoS ONE">
        <title>Function and X-ray crystal structure of Escherichia coli YfdE.</title>
        <authorList>
            <person name="Mullins E.A."/>
            <person name="Sullivan K.L."/>
            <person name="Kappock T.J."/>
        </authorList>
    </citation>
    <scope>FUNCTION</scope>
    <scope>CATALYTIC ACTIVITY</scope>
    <scope>BIOPHYSICOCHEMICAL PROPERTIES</scope>
    <scope>MASS SPECTROMETRY</scope>
    <scope>SUBSTRATE SPECIFICITY</scope>
    <scope>SUBUNIT</scope>
    <source>
        <strain>1023</strain>
    </source>
</reference>
<proteinExistence type="evidence at protein level"/>
<name>ACOCT_ACEAC</name>